<sequence length="189" mass="19915">MASKRALVILAKGAEEMETVIPVDIMRRAGIKVTVAGLAGKDPVQCSRDVMICPDTSLEDAKKQGPYDVVVLPGGNLGAQNLSESPVVKEILKEQESRKGLIAAICAGPTALLAHEIGFGSKVTTHPGAKDKMMNGSHYSYSESRVEKDGLILTSRGPGTSFEFALAIVEALSGKEAADQVKAPLVLKD</sequence>
<comment type="function">
    <text evidence="2 3">Multifunctional protein with controversial molecular function which plays an important role in cell protection against oxidative stress and cell death acting as oxidative stress sensor and redox-sensitive chaperone and protease. It is involved in neuroprotective mechanisms like the stabilization of NFE2L2 and PINK1 proteins, male fertility as a positive regulator of androgen signaling pathway as well as cell growth and transformation through, for instance, the modulation of NF-kappa-B signaling pathway. Has been described as a protein and nucleotide deglycase that catalyzes the deglycation of the Maillard adducts formed between amino groups of proteins or nucleotides and reactive carbonyl groups of glyoxals. But this function is rebuted by other works. As a protein deglycase, repairs methylglyoxal- and glyoxal-glycated proteins, and releases repaired proteins and lactate or glycolate, respectively. Deglycates cysteine, arginine and lysine residues in proteins, and thus reactivates these proteins by reversing glycation by glyoxals. Acts on early glycation intermediates (hemithioacetals and aminocarbinols), preventing the formation of advanced glycation endproducts (AGE) that cause irreversible damage. Also functions as a nucleotide deglycase able to repair glycated guanine in the free nucleotide pool (GTP, GDP, GMP, dGTP) and in DNA and RNA. Is thus involved in a major nucleotide repair system named guanine glycation repair (GG repair), dedicated to reversing methylglyoxal and glyoxal damage via nucleotide sanitization and direct nucleic acid repair. Protects histones from adduction by methylglyoxal, controls the levels of methylglyoxal-derived argininine modifications on chromatin. Able to remove the glycations and restore histone 3, histone glycation disrupts both local and global chromatin architecture by altering histone-DNA interactions as well as histone acetylation and ubiquitination levels. Displays a very low glyoxalase activity that may reflect its deglycase activity. Eliminates hydrogen peroxide and protects cells against hydrogen peroxide-induced cell death. Required for correct mitochondrial morphology and function as well as for autophagy of dysfunctional mitochondria. Plays a role in regulating expression or stability of the mitochondrial uncoupling proteins SLC25A14 and SLC25A27 in dopaminergic neurons of the substantia nigra pars compacta and attenuates the oxidative stress induced by calcium entry into the neurons via L-type channels during pacemaking. Regulates astrocyte inflammatory responses, may modulate lipid rafts-dependent endocytosis in astrocytes and neuronal cells. In pancreatic islets, involved in the maintenance of mitochondrial reactive oxygen species (ROS) levels and glucose homeostasis in an age- and diet dependent manner. Protects pancreatic beta cells from cell death induced by inflammatory and cytotoxic setting. Binds to a number of mRNAs containing multiple copies of GG or CC motifs and partially inhibits their translation but dissociates following oxidative stress. Metal-binding protein able to bind copper as well as toxic mercury ions, enhances the cell protection mechanism against induced metal toxicity. In macrophages, interacts with the NADPH oxidase subunit NCF1 to direct NADPH oxidase-dependent ROS production, and protects against sepsis.</text>
</comment>
<comment type="catalytic activity">
    <reaction evidence="2">
        <text>N(omega)-(1-hydroxy-2-oxopropyl)-L-arginyl-[protein] + H2O = lactate + L-arginyl-[protein] + H(+)</text>
        <dbReference type="Rhea" id="RHEA:49548"/>
        <dbReference type="Rhea" id="RHEA-COMP:10532"/>
        <dbReference type="Rhea" id="RHEA-COMP:12428"/>
        <dbReference type="ChEBI" id="CHEBI:15377"/>
        <dbReference type="ChEBI" id="CHEBI:15378"/>
        <dbReference type="ChEBI" id="CHEBI:24996"/>
        <dbReference type="ChEBI" id="CHEBI:29965"/>
        <dbReference type="ChEBI" id="CHEBI:131708"/>
        <dbReference type="EC" id="3.5.1.124"/>
    </reaction>
</comment>
<comment type="catalytic activity">
    <reaction evidence="2">
        <text>N(6)-(1-hydroxy-2-oxopropyl)-L-lysyl-[protein] + H2O = lactate + L-lysyl-[protein] + H(+)</text>
        <dbReference type="Rhea" id="RHEA:49552"/>
        <dbReference type="Rhea" id="RHEA-COMP:9752"/>
        <dbReference type="Rhea" id="RHEA-COMP:12429"/>
        <dbReference type="ChEBI" id="CHEBI:15377"/>
        <dbReference type="ChEBI" id="CHEBI:15378"/>
        <dbReference type="ChEBI" id="CHEBI:24996"/>
        <dbReference type="ChEBI" id="CHEBI:29969"/>
        <dbReference type="ChEBI" id="CHEBI:131709"/>
        <dbReference type="EC" id="3.5.1.124"/>
    </reaction>
</comment>
<comment type="catalytic activity">
    <reaction evidence="2">
        <text>S-(1-hydroxy-2-oxopropyl)-L-cysteinyl-[protein] + H2O = lactate + L-cysteinyl-[protein] + H(+)</text>
        <dbReference type="Rhea" id="RHEA:49556"/>
        <dbReference type="Rhea" id="RHEA-COMP:10131"/>
        <dbReference type="Rhea" id="RHEA-COMP:12430"/>
        <dbReference type="ChEBI" id="CHEBI:15377"/>
        <dbReference type="ChEBI" id="CHEBI:15378"/>
        <dbReference type="ChEBI" id="CHEBI:24996"/>
        <dbReference type="ChEBI" id="CHEBI:29950"/>
        <dbReference type="ChEBI" id="CHEBI:131710"/>
        <dbReference type="EC" id="3.5.1.124"/>
    </reaction>
</comment>
<comment type="catalytic activity">
    <reaction evidence="2">
        <text>N(omega)-(1-hydroxy-2-oxoethyl)-L-arginyl-[protein] + H2O = L-arginyl-[protein] + glycolate + H(+)</text>
        <dbReference type="Rhea" id="RHEA:57188"/>
        <dbReference type="Rhea" id="RHEA-COMP:10532"/>
        <dbReference type="Rhea" id="RHEA-COMP:14844"/>
        <dbReference type="ChEBI" id="CHEBI:15377"/>
        <dbReference type="ChEBI" id="CHEBI:15378"/>
        <dbReference type="ChEBI" id="CHEBI:29805"/>
        <dbReference type="ChEBI" id="CHEBI:29965"/>
        <dbReference type="ChEBI" id="CHEBI:141553"/>
        <dbReference type="EC" id="3.5.1.124"/>
    </reaction>
</comment>
<comment type="catalytic activity">
    <reaction evidence="2">
        <text>N(6)-(1-hydroxy-2-oxoethyl)-L-lysyl-[protein] + H2O = glycolate + L-lysyl-[protein] + H(+)</text>
        <dbReference type="Rhea" id="RHEA:57192"/>
        <dbReference type="Rhea" id="RHEA-COMP:9752"/>
        <dbReference type="Rhea" id="RHEA-COMP:14845"/>
        <dbReference type="ChEBI" id="CHEBI:15377"/>
        <dbReference type="ChEBI" id="CHEBI:15378"/>
        <dbReference type="ChEBI" id="CHEBI:29805"/>
        <dbReference type="ChEBI" id="CHEBI:29969"/>
        <dbReference type="ChEBI" id="CHEBI:141554"/>
        <dbReference type="EC" id="3.5.1.124"/>
    </reaction>
</comment>
<comment type="catalytic activity">
    <reaction evidence="2">
        <text>S-(1-hydroxy-2-oxoethyl)-L-cysteinyl-[protein] + H2O = glycolate + L-cysteinyl-[protein] + H(+)</text>
        <dbReference type="Rhea" id="RHEA:57196"/>
        <dbReference type="Rhea" id="RHEA-COMP:10131"/>
        <dbReference type="Rhea" id="RHEA-COMP:14846"/>
        <dbReference type="ChEBI" id="CHEBI:15377"/>
        <dbReference type="ChEBI" id="CHEBI:15378"/>
        <dbReference type="ChEBI" id="CHEBI:29805"/>
        <dbReference type="ChEBI" id="CHEBI:29950"/>
        <dbReference type="ChEBI" id="CHEBI:141555"/>
        <dbReference type="EC" id="3.5.1.124"/>
    </reaction>
</comment>
<comment type="catalytic activity">
    <reaction evidence="2">
        <text>N(2)-(1-hydroxy-2-oxopropyl)-dGTP + H2O = lactate + dGTP + H(+)</text>
        <dbReference type="Rhea" id="RHEA:57244"/>
        <dbReference type="ChEBI" id="CHEBI:15377"/>
        <dbReference type="ChEBI" id="CHEBI:15378"/>
        <dbReference type="ChEBI" id="CHEBI:24996"/>
        <dbReference type="ChEBI" id="CHEBI:61429"/>
        <dbReference type="ChEBI" id="CHEBI:141569"/>
    </reaction>
</comment>
<comment type="catalytic activity">
    <reaction evidence="2">
        <text>N(2)-(1-hydroxy-2-oxopropyl)-GTP + H2O = lactate + GTP + H(+)</text>
        <dbReference type="Rhea" id="RHEA:57256"/>
        <dbReference type="ChEBI" id="CHEBI:15377"/>
        <dbReference type="ChEBI" id="CHEBI:15378"/>
        <dbReference type="ChEBI" id="CHEBI:24996"/>
        <dbReference type="ChEBI" id="CHEBI:37565"/>
        <dbReference type="ChEBI" id="CHEBI:141570"/>
    </reaction>
</comment>
<comment type="catalytic activity">
    <reaction evidence="2">
        <text>N(2)-(1-hydroxy-2-oxopropyl)-GDP + H2O = lactate + GDP + H(+)</text>
        <dbReference type="Rhea" id="RHEA:57260"/>
        <dbReference type="ChEBI" id="CHEBI:15377"/>
        <dbReference type="ChEBI" id="CHEBI:15378"/>
        <dbReference type="ChEBI" id="CHEBI:24996"/>
        <dbReference type="ChEBI" id="CHEBI:58189"/>
        <dbReference type="ChEBI" id="CHEBI:141573"/>
    </reaction>
</comment>
<comment type="catalytic activity">
    <reaction evidence="2">
        <text>N(2)-(1-hydroxy-2-oxopropyl)-GMP + H2O = lactate + GMP + H(+)</text>
        <dbReference type="Rhea" id="RHEA:57268"/>
        <dbReference type="ChEBI" id="CHEBI:15377"/>
        <dbReference type="ChEBI" id="CHEBI:15378"/>
        <dbReference type="ChEBI" id="CHEBI:24996"/>
        <dbReference type="ChEBI" id="CHEBI:58115"/>
        <dbReference type="ChEBI" id="CHEBI:141575"/>
    </reaction>
</comment>
<comment type="catalytic activity">
    <reaction evidence="2">
        <text>N(2)-(1-hydroxy-2-oxoethyl)-dGTP + H2O = dGTP + glycolate + H(+)</text>
        <dbReference type="Rhea" id="RHEA:57248"/>
        <dbReference type="ChEBI" id="CHEBI:15377"/>
        <dbReference type="ChEBI" id="CHEBI:15378"/>
        <dbReference type="ChEBI" id="CHEBI:29805"/>
        <dbReference type="ChEBI" id="CHEBI:61429"/>
        <dbReference type="ChEBI" id="CHEBI:141572"/>
    </reaction>
</comment>
<comment type="catalytic activity">
    <reaction evidence="2">
        <text>N(2)-(1-hydroxy-2-oxoethyl)-GTP + H2O = glycolate + GTP + H(+)</text>
        <dbReference type="Rhea" id="RHEA:57252"/>
        <dbReference type="ChEBI" id="CHEBI:15377"/>
        <dbReference type="ChEBI" id="CHEBI:15378"/>
        <dbReference type="ChEBI" id="CHEBI:29805"/>
        <dbReference type="ChEBI" id="CHEBI:37565"/>
        <dbReference type="ChEBI" id="CHEBI:141571"/>
    </reaction>
</comment>
<comment type="catalytic activity">
    <reaction evidence="2">
        <text>N(2)-(1-hydroxy-2-oxoethyl)-GDP + H2O = glycolate + GDP + H(+)</text>
        <dbReference type="Rhea" id="RHEA:57264"/>
        <dbReference type="ChEBI" id="CHEBI:15377"/>
        <dbReference type="ChEBI" id="CHEBI:15378"/>
        <dbReference type="ChEBI" id="CHEBI:29805"/>
        <dbReference type="ChEBI" id="CHEBI:58189"/>
        <dbReference type="ChEBI" id="CHEBI:141574"/>
    </reaction>
</comment>
<comment type="catalytic activity">
    <reaction evidence="2">
        <text>N(2)-(1-hydroxy-2-oxoethyl)-GMP + H2O = glycolate + GMP + H(+)</text>
        <dbReference type="Rhea" id="RHEA:57304"/>
        <dbReference type="ChEBI" id="CHEBI:15377"/>
        <dbReference type="ChEBI" id="CHEBI:15378"/>
        <dbReference type="ChEBI" id="CHEBI:29805"/>
        <dbReference type="ChEBI" id="CHEBI:58115"/>
        <dbReference type="ChEBI" id="CHEBI:141576"/>
    </reaction>
</comment>
<comment type="catalytic activity">
    <reaction evidence="2">
        <text>an N(2)-(1-hydroxy-2-oxopropyl)-guanosine in RNA + H2O = a guanosine in RNA + lactate + H(+)</text>
        <dbReference type="Rhea" id="RHEA:57288"/>
        <dbReference type="Rhea" id="RHEA-COMP:14855"/>
        <dbReference type="Rhea" id="RHEA-COMP:14858"/>
        <dbReference type="ChEBI" id="CHEBI:15377"/>
        <dbReference type="ChEBI" id="CHEBI:15378"/>
        <dbReference type="ChEBI" id="CHEBI:24996"/>
        <dbReference type="ChEBI" id="CHEBI:74269"/>
        <dbReference type="ChEBI" id="CHEBI:141580"/>
    </reaction>
</comment>
<comment type="catalytic activity">
    <reaction evidence="2">
        <text>an N(2)-(1-hydroxy-2-oxopropyl)-2'-deoxyguanosine in DNA + H2O = a 2'-deoxyguanosine in DNA + lactate + H(+)</text>
        <dbReference type="Rhea" id="RHEA:57300"/>
        <dbReference type="Rhea" id="RHEA-COMP:11367"/>
        <dbReference type="Rhea" id="RHEA-COMP:14856"/>
        <dbReference type="ChEBI" id="CHEBI:15377"/>
        <dbReference type="ChEBI" id="CHEBI:15378"/>
        <dbReference type="ChEBI" id="CHEBI:24996"/>
        <dbReference type="ChEBI" id="CHEBI:85445"/>
        <dbReference type="ChEBI" id="CHEBI:141578"/>
    </reaction>
</comment>
<comment type="catalytic activity">
    <reaction evidence="2">
        <text>an N(2)-(1-hydroxy-2-oxoethyl)-guanosine in RNA + H2O = a guanosine in RNA + glycolate + H(+)</text>
        <dbReference type="Rhea" id="RHEA:57292"/>
        <dbReference type="Rhea" id="RHEA-COMP:14855"/>
        <dbReference type="Rhea" id="RHEA-COMP:14859"/>
        <dbReference type="ChEBI" id="CHEBI:15377"/>
        <dbReference type="ChEBI" id="CHEBI:15378"/>
        <dbReference type="ChEBI" id="CHEBI:29805"/>
        <dbReference type="ChEBI" id="CHEBI:74269"/>
        <dbReference type="ChEBI" id="CHEBI:141581"/>
    </reaction>
</comment>
<comment type="catalytic activity">
    <reaction evidence="2">
        <text>an N(2)-(1-hydroxy-2-oxoethyl)-2'-deoxyguanosine in DNA + H2O = a 2'-deoxyguanosine in DNA + glycolate + H(+)</text>
        <dbReference type="Rhea" id="RHEA:57296"/>
        <dbReference type="Rhea" id="RHEA-COMP:11367"/>
        <dbReference type="Rhea" id="RHEA-COMP:14857"/>
        <dbReference type="ChEBI" id="CHEBI:15377"/>
        <dbReference type="ChEBI" id="CHEBI:15378"/>
        <dbReference type="ChEBI" id="CHEBI:29805"/>
        <dbReference type="ChEBI" id="CHEBI:85445"/>
        <dbReference type="ChEBI" id="CHEBI:141579"/>
    </reaction>
</comment>
<comment type="cofactor">
    <text evidence="2">Deglycase activity does not require glutathione as a cofactor, however, glycated glutathione constitutes a PARK7 substrate.</text>
</comment>
<comment type="subunit">
    <text evidence="2 3">Homodimer. Binds EFCAB6/DJBP and PIAS2. Part of a ternary complex containing PARK7, EFCAB6/DJBP and AR. Interacts (via N-terminus) with OTUD7B. Interacts with BBS1, HIPK1, CLCF1 and MTERF. Forms a complex with PINK1 and PRKN (By similarity). Interacts (via C-terminus) with NCF1; the interaction is enhanced by LPS and modulates NCF1 phosphorylation and membrane translocation (By similarity). Interacts with NENF (By similarity).</text>
</comment>
<comment type="subcellular location">
    <subcellularLocation>
        <location evidence="1">Cell membrane</location>
        <topology evidence="1">Lipid-anchor</topology>
    </subcellularLocation>
    <subcellularLocation>
        <location evidence="2">Cytoplasm</location>
    </subcellularLocation>
    <subcellularLocation>
        <location evidence="2">Nucleus</location>
    </subcellularLocation>
    <subcellularLocation>
        <location evidence="1">Membrane raft</location>
    </subcellularLocation>
    <subcellularLocation>
        <location evidence="2">Mitochondrion</location>
    </subcellularLocation>
    <subcellularLocation>
        <location evidence="2">Endoplasmic reticulum</location>
    </subcellularLocation>
    <text evidence="2">Under normal conditions, located predominantly in the cytoplasm and, to a lesser extent, in the nucleus and mitochondrion. Translocates to the mitochondrion and subsequently to the nucleus in response to oxidative stress and exerts an increased cytoprotective effect against oxidative damage. Membrane raft localization in astrocytes and neuronal cells requires palmitoylation.</text>
</comment>
<comment type="tissue specificity">
    <text evidence="4">Detected in liver, heart, spleen and testis (at protein level). Detected in liver, heart, spleen, kidney, epididymidis, vas deferens, sperm cells and testis.</text>
</comment>
<comment type="PTM">
    <text evidence="2">Sumoylated on Lys-130 by PIAS2 or PIAS4; which is essential for cell-growth promoting activity and transforming activity.</text>
</comment>
<comment type="PTM">
    <text evidence="2">Undergoes cleavage of a C-terminal peptide and subsequent activation of protease activity in response to oxidative stress.</text>
</comment>
<comment type="similarity">
    <text evidence="5">Belongs to the peptidase C56 family.</text>
</comment>
<comment type="caution">
    <text evidence="2">Glyoxalase activity has been reported. It may however reflect its deglycase activity.</text>
</comment>
<comment type="caution">
    <text evidence="2">The protein deglycation activity is controversial. It has been ascribed to a TRIS buffer artifact by a publication and as a result of the removal of methylglyoxal by glyoxalase activity that leads to a subsequent decomposition of hemithioacetals and hemianimals due to the shift in equilibrium position by another one. However, biochemical experiments showing that PARK7 is a bona fide deglycase have been performed.</text>
</comment>
<name>PARK7_MESAU</name>
<dbReference type="EC" id="3.1.2.-" evidence="2"/>
<dbReference type="EC" id="3.5.1.-" evidence="2"/>
<dbReference type="EC" id="3.5.1.124" evidence="2"/>
<dbReference type="EMBL" id="AJ431372">
    <property type="protein sequence ID" value="CAD24072.2"/>
    <property type="molecule type" value="mRNA"/>
</dbReference>
<dbReference type="RefSeq" id="NP_001268568.1">
    <property type="nucleotide sequence ID" value="NM_001281639.1"/>
</dbReference>
<dbReference type="SMR" id="Q7TQ35"/>
<dbReference type="STRING" id="10036.ENSMAUP00000015301"/>
<dbReference type="MEROPS" id="C56.971"/>
<dbReference type="GeneID" id="101826467"/>
<dbReference type="KEGG" id="maua:101826467"/>
<dbReference type="CTD" id="11315"/>
<dbReference type="eggNOG" id="KOG2764">
    <property type="taxonomic scope" value="Eukaryota"/>
</dbReference>
<dbReference type="OrthoDB" id="543156at2759"/>
<dbReference type="Proteomes" id="UP000189706">
    <property type="component" value="Unplaced"/>
</dbReference>
<dbReference type="GO" id="GO:0005737">
    <property type="term" value="C:cytoplasm"/>
    <property type="evidence" value="ECO:0000250"/>
    <property type="project" value="UniProtKB"/>
</dbReference>
<dbReference type="GO" id="GO:0005829">
    <property type="term" value="C:cytosol"/>
    <property type="evidence" value="ECO:0000250"/>
    <property type="project" value="UniProtKB"/>
</dbReference>
<dbReference type="GO" id="GO:0005783">
    <property type="term" value="C:endoplasmic reticulum"/>
    <property type="evidence" value="ECO:0007669"/>
    <property type="project" value="UniProtKB-SubCell"/>
</dbReference>
<dbReference type="GO" id="GO:0045121">
    <property type="term" value="C:membrane raft"/>
    <property type="evidence" value="ECO:0007669"/>
    <property type="project" value="UniProtKB-SubCell"/>
</dbReference>
<dbReference type="GO" id="GO:0005739">
    <property type="term" value="C:mitochondrion"/>
    <property type="evidence" value="ECO:0000250"/>
    <property type="project" value="UniProtKB"/>
</dbReference>
<dbReference type="GO" id="GO:0005634">
    <property type="term" value="C:nucleus"/>
    <property type="evidence" value="ECO:0000250"/>
    <property type="project" value="UniProtKB"/>
</dbReference>
<dbReference type="GO" id="GO:0005886">
    <property type="term" value="C:plasma membrane"/>
    <property type="evidence" value="ECO:0007669"/>
    <property type="project" value="UniProtKB-SubCell"/>
</dbReference>
<dbReference type="GO" id="GO:0005507">
    <property type="term" value="F:copper ion binding"/>
    <property type="evidence" value="ECO:0000250"/>
    <property type="project" value="UniProtKB"/>
</dbReference>
<dbReference type="GO" id="GO:1990422">
    <property type="term" value="F:glyoxalase (glycolic acid-forming) activity"/>
    <property type="evidence" value="ECO:0000250"/>
    <property type="project" value="UniProtKB"/>
</dbReference>
<dbReference type="GO" id="GO:0045340">
    <property type="term" value="F:mercury ion binding"/>
    <property type="evidence" value="ECO:0000250"/>
    <property type="project" value="UniProtKB"/>
</dbReference>
<dbReference type="GO" id="GO:0003729">
    <property type="term" value="F:mRNA binding"/>
    <property type="evidence" value="ECO:0000250"/>
    <property type="project" value="UniProtKB"/>
</dbReference>
<dbReference type="GO" id="GO:0016684">
    <property type="term" value="F:oxidoreductase activity, acting on peroxide as acceptor"/>
    <property type="evidence" value="ECO:0007669"/>
    <property type="project" value="TreeGrafter"/>
</dbReference>
<dbReference type="GO" id="GO:0008233">
    <property type="term" value="F:peptidase activity"/>
    <property type="evidence" value="ECO:0000250"/>
    <property type="project" value="UniProtKB"/>
</dbReference>
<dbReference type="GO" id="GO:0036524">
    <property type="term" value="F:protein deglycase activity"/>
    <property type="evidence" value="ECO:0000250"/>
    <property type="project" value="UniProtKB"/>
</dbReference>
<dbReference type="GO" id="GO:0042803">
    <property type="term" value="F:protein homodimerization activity"/>
    <property type="evidence" value="ECO:0000250"/>
    <property type="project" value="UniProtKB"/>
</dbReference>
<dbReference type="GO" id="GO:0006914">
    <property type="term" value="P:autophagy"/>
    <property type="evidence" value="ECO:0007669"/>
    <property type="project" value="UniProtKB-KW"/>
</dbReference>
<dbReference type="GO" id="GO:0110095">
    <property type="term" value="P:cellular detoxification of aldehyde"/>
    <property type="evidence" value="ECO:0000250"/>
    <property type="project" value="UniProtKB"/>
</dbReference>
<dbReference type="GO" id="GO:0140041">
    <property type="term" value="P:cellular detoxification of methylglyoxal"/>
    <property type="evidence" value="ECO:0000250"/>
    <property type="project" value="UniProtKB"/>
</dbReference>
<dbReference type="GO" id="GO:0034599">
    <property type="term" value="P:cellular response to oxidative stress"/>
    <property type="evidence" value="ECO:0000250"/>
    <property type="project" value="UniProtKB"/>
</dbReference>
<dbReference type="GO" id="GO:0010273">
    <property type="term" value="P:detoxification of copper ion"/>
    <property type="evidence" value="ECO:0000250"/>
    <property type="project" value="UniProtKB"/>
</dbReference>
<dbReference type="GO" id="GO:0061691">
    <property type="term" value="P:detoxification of hydrogen peroxide"/>
    <property type="evidence" value="ECO:0000250"/>
    <property type="project" value="UniProtKB"/>
</dbReference>
<dbReference type="GO" id="GO:0006281">
    <property type="term" value="P:DNA repair"/>
    <property type="evidence" value="ECO:0000250"/>
    <property type="project" value="UniProtKB"/>
</dbReference>
<dbReference type="GO" id="GO:0042593">
    <property type="term" value="P:glucose homeostasis"/>
    <property type="evidence" value="ECO:0000250"/>
    <property type="project" value="UniProtKB"/>
</dbReference>
<dbReference type="GO" id="GO:0106044">
    <property type="term" value="P:guanine deglycation"/>
    <property type="evidence" value="ECO:0000250"/>
    <property type="project" value="UniProtKB"/>
</dbReference>
<dbReference type="GO" id="GO:0106046">
    <property type="term" value="P:guanine deglycation, glyoxal removal"/>
    <property type="evidence" value="ECO:0000250"/>
    <property type="project" value="UniProtKB"/>
</dbReference>
<dbReference type="GO" id="GO:0106045">
    <property type="term" value="P:guanine deglycation, methylglyoxal removal"/>
    <property type="evidence" value="ECO:0000250"/>
    <property type="project" value="UniProtKB"/>
</dbReference>
<dbReference type="GO" id="GO:0006954">
    <property type="term" value="P:inflammatory response"/>
    <property type="evidence" value="ECO:0007669"/>
    <property type="project" value="UniProtKB-KW"/>
</dbReference>
<dbReference type="GO" id="GO:0030073">
    <property type="term" value="P:insulin secretion"/>
    <property type="evidence" value="ECO:0000250"/>
    <property type="project" value="UniProtKB"/>
</dbReference>
<dbReference type="GO" id="GO:0061727">
    <property type="term" value="P:methylglyoxal catabolic process to lactate"/>
    <property type="evidence" value="ECO:0000250"/>
    <property type="project" value="UniProtKB"/>
</dbReference>
<dbReference type="GO" id="GO:0007005">
    <property type="term" value="P:mitochondrion organization"/>
    <property type="evidence" value="ECO:0000250"/>
    <property type="project" value="UniProtKB"/>
</dbReference>
<dbReference type="GO" id="GO:1903427">
    <property type="term" value="P:negative regulation of reactive oxygen species biosynthetic process"/>
    <property type="evidence" value="ECO:0000250"/>
    <property type="project" value="UniProtKB"/>
</dbReference>
<dbReference type="GO" id="GO:0002866">
    <property type="term" value="P:positive regulation of acute inflammatory response to antigenic stimulus"/>
    <property type="evidence" value="ECO:0000250"/>
    <property type="project" value="UniProtKB"/>
</dbReference>
<dbReference type="GO" id="GO:0033864">
    <property type="term" value="P:positive regulation of NAD(P)H oxidase activity"/>
    <property type="evidence" value="ECO:0000250"/>
    <property type="project" value="UniProtKB"/>
</dbReference>
<dbReference type="GO" id="GO:2000277">
    <property type="term" value="P:positive regulation of oxidative phosphorylation uncoupler activity"/>
    <property type="evidence" value="ECO:0000250"/>
    <property type="project" value="UniProtKB"/>
</dbReference>
<dbReference type="GO" id="GO:0050821">
    <property type="term" value="P:protein stabilization"/>
    <property type="evidence" value="ECO:0000250"/>
    <property type="project" value="UniProtKB"/>
</dbReference>
<dbReference type="GO" id="GO:0006508">
    <property type="term" value="P:proteolysis"/>
    <property type="evidence" value="ECO:0007669"/>
    <property type="project" value="UniProtKB-KW"/>
</dbReference>
<dbReference type="GO" id="GO:0050727">
    <property type="term" value="P:regulation of inflammatory response"/>
    <property type="evidence" value="ECO:0000250"/>
    <property type="project" value="UniProtKB"/>
</dbReference>
<dbReference type="GO" id="GO:0043523">
    <property type="term" value="P:regulation of neuron apoptotic process"/>
    <property type="evidence" value="ECO:0000250"/>
    <property type="project" value="UniProtKB"/>
</dbReference>
<dbReference type="GO" id="GO:0006979">
    <property type="term" value="P:response to oxidative stress"/>
    <property type="evidence" value="ECO:0000250"/>
    <property type="project" value="UniProtKB"/>
</dbReference>
<dbReference type="GO" id="GO:0007338">
    <property type="term" value="P:single fertilization"/>
    <property type="evidence" value="ECO:0007669"/>
    <property type="project" value="UniProtKB-KW"/>
</dbReference>
<dbReference type="CDD" id="cd03135">
    <property type="entry name" value="GATase1_DJ-1"/>
    <property type="match status" value="1"/>
</dbReference>
<dbReference type="FunFam" id="3.40.50.880:FF:000046">
    <property type="entry name" value="Protein/nucleic acid deglycase DJ-1"/>
    <property type="match status" value="1"/>
</dbReference>
<dbReference type="Gene3D" id="3.40.50.880">
    <property type="match status" value="1"/>
</dbReference>
<dbReference type="InterPro" id="IPR029062">
    <property type="entry name" value="Class_I_gatase-like"/>
</dbReference>
<dbReference type="InterPro" id="IPR006287">
    <property type="entry name" value="DJ-1"/>
</dbReference>
<dbReference type="InterPro" id="IPR002818">
    <property type="entry name" value="DJ-1/PfpI"/>
</dbReference>
<dbReference type="InterPro" id="IPR050325">
    <property type="entry name" value="Prot/Nucl_acid_deglycase"/>
</dbReference>
<dbReference type="NCBIfam" id="TIGR01383">
    <property type="entry name" value="not_thiJ"/>
    <property type="match status" value="1"/>
</dbReference>
<dbReference type="PANTHER" id="PTHR48094:SF12">
    <property type="entry name" value="PARKINSON DISEASE PROTEIN 7 HOMOLOG"/>
    <property type="match status" value="1"/>
</dbReference>
<dbReference type="PANTHER" id="PTHR48094">
    <property type="entry name" value="PROTEIN/NUCLEIC ACID DEGLYCASE DJ-1-RELATED"/>
    <property type="match status" value="1"/>
</dbReference>
<dbReference type="Pfam" id="PF01965">
    <property type="entry name" value="DJ-1_PfpI"/>
    <property type="match status" value="1"/>
</dbReference>
<dbReference type="SUPFAM" id="SSF52317">
    <property type="entry name" value="Class I glutamine amidotransferase-like"/>
    <property type="match status" value="1"/>
</dbReference>
<protein>
    <recommendedName>
        <fullName evidence="5">Parkinson disease protein 7 homolog</fullName>
    </recommendedName>
    <alternativeName>
        <fullName evidence="5">Contraception-associated protein 1</fullName>
    </alternativeName>
    <alternativeName>
        <fullName evidence="2">Maillard deglycase</fullName>
    </alternativeName>
    <alternativeName>
        <fullName evidence="2">Parkinsonism-associated deglycase</fullName>
    </alternativeName>
    <alternativeName>
        <fullName evidence="2">Protein DJ-1</fullName>
        <shortName>DJ-1</shortName>
    </alternativeName>
    <alternativeName>
        <fullName evidence="2">Protein/nucleic acid deglycase DJ-1</fullName>
        <ecNumber evidence="2">3.1.2.-</ecNumber>
        <ecNumber evidence="2">3.5.1.-</ecNumber>
        <ecNumber evidence="2">3.5.1.124</ecNumber>
    </alternativeName>
    <component>
        <recommendedName>
            <fullName>Parkinson disease protein 7 homolog, N-terminally processed</fullName>
        </recommendedName>
    </component>
</protein>
<evidence type="ECO:0000250" key="1">
    <source>
        <dbReference type="UniProtKB" id="O88767"/>
    </source>
</evidence>
<evidence type="ECO:0000250" key="2">
    <source>
        <dbReference type="UniProtKB" id="Q99497"/>
    </source>
</evidence>
<evidence type="ECO:0000250" key="3">
    <source>
        <dbReference type="UniProtKB" id="Q99LX0"/>
    </source>
</evidence>
<evidence type="ECO:0000269" key="4">
    <source>
    </source>
</evidence>
<evidence type="ECO:0000305" key="5"/>
<proteinExistence type="evidence at protein level"/>
<gene>
    <name type="primary">PARK7</name>
    <name type="synonym">CAP1</name>
</gene>
<accession>Q7TQ35</accession>
<keyword id="KW-0007">Acetylation</keyword>
<keyword id="KW-0072">Autophagy</keyword>
<keyword id="KW-1003">Cell membrane</keyword>
<keyword id="KW-0143">Chaperone</keyword>
<keyword id="KW-0186">Copper</keyword>
<keyword id="KW-0963">Cytoplasm</keyword>
<keyword id="KW-0903">Direct protein sequencing</keyword>
<keyword id="KW-0256">Endoplasmic reticulum</keyword>
<keyword id="KW-0278">Fertilization</keyword>
<keyword id="KW-0378">Hydrolase</keyword>
<keyword id="KW-0395">Inflammatory response</keyword>
<keyword id="KW-1017">Isopeptide bond</keyword>
<keyword id="KW-0449">Lipoprotein</keyword>
<keyword id="KW-0472">Membrane</keyword>
<keyword id="KW-0496">Mitochondrion</keyword>
<keyword id="KW-0539">Nucleus</keyword>
<keyword id="KW-0558">Oxidation</keyword>
<keyword id="KW-0564">Palmitate</keyword>
<keyword id="KW-0597">Phosphoprotein</keyword>
<keyword id="KW-0645">Protease</keyword>
<keyword id="KW-1185">Reference proteome</keyword>
<keyword id="KW-0694">RNA-binding</keyword>
<keyword id="KW-0346">Stress response</keyword>
<keyword id="KW-0043">Tumor suppressor</keyword>
<keyword id="KW-0832">Ubl conjugation</keyword>
<keyword id="KW-0865">Zymogen</keyword>
<feature type="chain" id="PRO_0000434372" description="Parkinson disease protein 7 homolog">
    <location>
        <begin position="1"/>
        <end status="unknown"/>
    </location>
</feature>
<feature type="initiator methionine" description="Removed; alternate" evidence="2">
    <location>
        <position position="1"/>
    </location>
</feature>
<feature type="chain" id="PRO_0000443353" description="Parkinson disease protein 7 homolog, N-terminally processed">
    <location>
        <begin position="2"/>
        <end status="unknown"/>
    </location>
</feature>
<feature type="propeptide" id="PRO_0000405559" description="Removed in mature form">
    <location>
        <begin status="unknown"/>
        <end position="189"/>
    </location>
</feature>
<feature type="active site" description="Nucleophile" evidence="2">
    <location>
        <position position="106"/>
    </location>
</feature>
<feature type="active site" evidence="2">
    <location>
        <position position="126"/>
    </location>
</feature>
<feature type="site" description="Cleavage; by CASP6" evidence="3">
    <location>
        <begin position="149"/>
        <end position="150"/>
    </location>
</feature>
<feature type="modified residue" description="N-acetylalanine; in Protein/nucleic acid deglycase DJ-1, N-terminally processed" evidence="2">
    <location>
        <position position="2"/>
    </location>
</feature>
<feature type="modified residue" description="Phosphotyrosine" evidence="2">
    <location>
        <position position="67"/>
    </location>
</feature>
<feature type="modified residue" description="Cysteine sulfinic acid (-SO2H); alternate" evidence="2">
    <location>
        <position position="106"/>
    </location>
</feature>
<feature type="modified residue" description="N6-acetyllysine" evidence="3">
    <location>
        <position position="148"/>
    </location>
</feature>
<feature type="modified residue" description="N6-succinyllysine" evidence="3">
    <location>
        <position position="182"/>
    </location>
</feature>
<feature type="lipid moiety-binding region" description="S-palmitoyl cysteine" evidence="2">
    <location>
        <position position="46"/>
    </location>
</feature>
<feature type="lipid moiety-binding region" description="S-palmitoyl cysteine" evidence="2">
    <location>
        <position position="53"/>
    </location>
</feature>
<feature type="lipid moiety-binding region" description="S-palmitoyl cysteine; alternate" evidence="2">
    <location>
        <position position="106"/>
    </location>
</feature>
<feature type="cross-link" description="Glycyl lysine isopeptide (Lys-Gly) (interchain with G-Cter in SUMO)" evidence="2">
    <location>
        <position position="130"/>
    </location>
</feature>
<reference key="1">
    <citation type="journal article" date="2004" name="Mol. Reprod. Dev.">
        <title>Hamster contraception associated protein 1 (CAP1).</title>
        <authorList>
            <person name="Siva A.B."/>
            <person name="Sundareswaran V.R."/>
            <person name="Yeung C.-H."/>
            <person name="Cooper T.G."/>
            <person name="Shivaji S."/>
        </authorList>
    </citation>
    <scope>NUCLEOTIDE SEQUENCE [MRNA]</scope>
    <scope>PROTEIN SEQUENCE OF 1-15</scope>
    <scope>TISSUE SPECIFICITY</scope>
    <source>
        <tissue>Testis</tissue>
    </source>
</reference>
<reference key="2">
    <citation type="journal article" date="2010" name="Asian J. Androl.">
        <title>Glucose-regulated protein precursor (GRP78) and tumor rejection antigen (GP96) are unique to hamster caput epididymal spermatozoa.</title>
        <authorList>
            <person name="Kameshwari D.B."/>
            <person name="Bhande S."/>
            <person name="Sundaram C.S."/>
            <person name="Kota V."/>
            <person name="Siva A.B."/>
            <person name="Shivaji S."/>
        </authorList>
    </citation>
    <scope>IDENTIFICATION BY MASS SPECTROMETRY</scope>
</reference>
<organism>
    <name type="scientific">Mesocricetus auratus</name>
    <name type="common">Golden hamster</name>
    <dbReference type="NCBI Taxonomy" id="10036"/>
    <lineage>
        <taxon>Eukaryota</taxon>
        <taxon>Metazoa</taxon>
        <taxon>Chordata</taxon>
        <taxon>Craniata</taxon>
        <taxon>Vertebrata</taxon>
        <taxon>Euteleostomi</taxon>
        <taxon>Mammalia</taxon>
        <taxon>Eutheria</taxon>
        <taxon>Euarchontoglires</taxon>
        <taxon>Glires</taxon>
        <taxon>Rodentia</taxon>
        <taxon>Myomorpha</taxon>
        <taxon>Muroidea</taxon>
        <taxon>Cricetidae</taxon>
        <taxon>Cricetinae</taxon>
        <taxon>Mesocricetus</taxon>
    </lineage>
</organism>